<sequence>MKIKIIKLTESAQVPRYSHADDAGLDLFAIEAQKILPGASALIPTGIAIELPQGTEAQVRPRSGLALKHSITVLNSPGTIDAGYRGEIGVILINHGQETFQVVEGMKIAQMVIAPIMRAEIEEVTELSATQRGEGGFGSTGYA</sequence>
<evidence type="ECO:0000255" key="1">
    <source>
        <dbReference type="HAMAP-Rule" id="MF_00116"/>
    </source>
</evidence>
<comment type="function">
    <text evidence="1">This enzyme is involved in nucleotide metabolism: it produces dUMP, the immediate precursor of thymidine nucleotides and it decreases the intracellular concentration of dUTP so that uracil cannot be incorporated into DNA.</text>
</comment>
<comment type="catalytic activity">
    <reaction evidence="1">
        <text>dUTP + H2O = dUMP + diphosphate + H(+)</text>
        <dbReference type="Rhea" id="RHEA:10248"/>
        <dbReference type="ChEBI" id="CHEBI:15377"/>
        <dbReference type="ChEBI" id="CHEBI:15378"/>
        <dbReference type="ChEBI" id="CHEBI:33019"/>
        <dbReference type="ChEBI" id="CHEBI:61555"/>
        <dbReference type="ChEBI" id="CHEBI:246422"/>
        <dbReference type="EC" id="3.6.1.23"/>
    </reaction>
</comment>
<comment type="cofactor">
    <cofactor evidence="1">
        <name>Mg(2+)</name>
        <dbReference type="ChEBI" id="CHEBI:18420"/>
    </cofactor>
</comment>
<comment type="pathway">
    <text evidence="1">Pyrimidine metabolism; dUMP biosynthesis; dUMP from dCTP (dUTP route): step 2/2.</text>
</comment>
<comment type="similarity">
    <text evidence="1">Belongs to the dUTPase family.</text>
</comment>
<dbReference type="EC" id="3.6.1.23" evidence="1"/>
<dbReference type="EMBL" id="CP000828">
    <property type="protein sequence ID" value="ABW30185.1"/>
    <property type="molecule type" value="Genomic_DNA"/>
</dbReference>
<dbReference type="RefSeq" id="WP_012165446.1">
    <property type="nucleotide sequence ID" value="NC_009925.1"/>
</dbReference>
<dbReference type="SMR" id="B0C9N7"/>
<dbReference type="STRING" id="329726.AM1_5223"/>
<dbReference type="KEGG" id="amr:AM1_5223"/>
<dbReference type="eggNOG" id="COG0756">
    <property type="taxonomic scope" value="Bacteria"/>
</dbReference>
<dbReference type="HOGENOM" id="CLU_068508_1_2_3"/>
<dbReference type="OrthoDB" id="9809956at2"/>
<dbReference type="UniPathway" id="UPA00610">
    <property type="reaction ID" value="UER00666"/>
</dbReference>
<dbReference type="Proteomes" id="UP000000268">
    <property type="component" value="Chromosome"/>
</dbReference>
<dbReference type="GO" id="GO:0004170">
    <property type="term" value="F:dUTP diphosphatase activity"/>
    <property type="evidence" value="ECO:0007669"/>
    <property type="project" value="UniProtKB-UniRule"/>
</dbReference>
<dbReference type="GO" id="GO:0000287">
    <property type="term" value="F:magnesium ion binding"/>
    <property type="evidence" value="ECO:0007669"/>
    <property type="project" value="UniProtKB-UniRule"/>
</dbReference>
<dbReference type="GO" id="GO:0006226">
    <property type="term" value="P:dUMP biosynthetic process"/>
    <property type="evidence" value="ECO:0007669"/>
    <property type="project" value="UniProtKB-UniRule"/>
</dbReference>
<dbReference type="GO" id="GO:0046081">
    <property type="term" value="P:dUTP catabolic process"/>
    <property type="evidence" value="ECO:0007669"/>
    <property type="project" value="InterPro"/>
</dbReference>
<dbReference type="CDD" id="cd07557">
    <property type="entry name" value="trimeric_dUTPase"/>
    <property type="match status" value="1"/>
</dbReference>
<dbReference type="FunFam" id="2.70.40.10:FF:000008">
    <property type="entry name" value="Deoxyuridine 5'-triphosphate nucleotidohydrolase"/>
    <property type="match status" value="1"/>
</dbReference>
<dbReference type="Gene3D" id="2.70.40.10">
    <property type="match status" value="1"/>
</dbReference>
<dbReference type="HAMAP" id="MF_00116">
    <property type="entry name" value="dUTPase_bact"/>
    <property type="match status" value="1"/>
</dbReference>
<dbReference type="InterPro" id="IPR008181">
    <property type="entry name" value="dUTPase"/>
</dbReference>
<dbReference type="InterPro" id="IPR029054">
    <property type="entry name" value="dUTPase-like"/>
</dbReference>
<dbReference type="InterPro" id="IPR036157">
    <property type="entry name" value="dUTPase-like_sf"/>
</dbReference>
<dbReference type="InterPro" id="IPR033704">
    <property type="entry name" value="dUTPase_trimeric"/>
</dbReference>
<dbReference type="NCBIfam" id="TIGR00576">
    <property type="entry name" value="dut"/>
    <property type="match status" value="1"/>
</dbReference>
<dbReference type="NCBIfam" id="NF001862">
    <property type="entry name" value="PRK00601.1"/>
    <property type="match status" value="1"/>
</dbReference>
<dbReference type="PANTHER" id="PTHR11241">
    <property type="entry name" value="DEOXYURIDINE 5'-TRIPHOSPHATE NUCLEOTIDOHYDROLASE"/>
    <property type="match status" value="1"/>
</dbReference>
<dbReference type="PANTHER" id="PTHR11241:SF0">
    <property type="entry name" value="DEOXYURIDINE 5'-TRIPHOSPHATE NUCLEOTIDOHYDROLASE"/>
    <property type="match status" value="1"/>
</dbReference>
<dbReference type="Pfam" id="PF00692">
    <property type="entry name" value="dUTPase"/>
    <property type="match status" value="1"/>
</dbReference>
<dbReference type="SUPFAM" id="SSF51283">
    <property type="entry name" value="dUTPase-like"/>
    <property type="match status" value="1"/>
</dbReference>
<keyword id="KW-0378">Hydrolase</keyword>
<keyword id="KW-0460">Magnesium</keyword>
<keyword id="KW-0479">Metal-binding</keyword>
<keyword id="KW-0546">Nucleotide metabolism</keyword>
<keyword id="KW-1185">Reference proteome</keyword>
<gene>
    <name evidence="1" type="primary">dut</name>
    <name type="ordered locus">AM1_5223</name>
</gene>
<feature type="chain" id="PRO_1000076050" description="Deoxyuridine 5'-triphosphate nucleotidohydrolase">
    <location>
        <begin position="1"/>
        <end position="143"/>
    </location>
</feature>
<feature type="binding site" evidence="1">
    <location>
        <begin position="62"/>
        <end position="64"/>
    </location>
    <ligand>
        <name>substrate</name>
    </ligand>
</feature>
<feature type="binding site" evidence="1">
    <location>
        <position position="75"/>
    </location>
    <ligand>
        <name>substrate</name>
    </ligand>
</feature>
<feature type="binding site" evidence="1">
    <location>
        <begin position="79"/>
        <end position="81"/>
    </location>
    <ligand>
        <name>substrate</name>
    </ligand>
</feature>
<reference key="1">
    <citation type="journal article" date="2008" name="Proc. Natl. Acad. Sci. U.S.A.">
        <title>Niche adaptation and genome expansion in the chlorophyll d-producing cyanobacterium Acaryochloris marina.</title>
        <authorList>
            <person name="Swingley W.D."/>
            <person name="Chen M."/>
            <person name="Cheung P.C."/>
            <person name="Conrad A.L."/>
            <person name="Dejesa L.C."/>
            <person name="Hao J."/>
            <person name="Honchak B.M."/>
            <person name="Karbach L.E."/>
            <person name="Kurdoglu A."/>
            <person name="Lahiri S."/>
            <person name="Mastrian S.D."/>
            <person name="Miyashita H."/>
            <person name="Page L."/>
            <person name="Ramakrishna P."/>
            <person name="Satoh S."/>
            <person name="Sattley W.M."/>
            <person name="Shimada Y."/>
            <person name="Taylor H.L."/>
            <person name="Tomo T."/>
            <person name="Tsuchiya T."/>
            <person name="Wang Z.T."/>
            <person name="Raymond J."/>
            <person name="Mimuro M."/>
            <person name="Blankenship R.E."/>
            <person name="Touchman J.W."/>
        </authorList>
    </citation>
    <scope>NUCLEOTIDE SEQUENCE [LARGE SCALE GENOMIC DNA]</scope>
    <source>
        <strain>MBIC 11017</strain>
    </source>
</reference>
<protein>
    <recommendedName>
        <fullName evidence="1">Deoxyuridine 5'-triphosphate nucleotidohydrolase</fullName>
        <shortName evidence="1">dUTPase</shortName>
        <ecNumber evidence="1">3.6.1.23</ecNumber>
    </recommendedName>
    <alternativeName>
        <fullName evidence="1">dUTP pyrophosphatase</fullName>
    </alternativeName>
</protein>
<organism>
    <name type="scientific">Acaryochloris marina (strain MBIC 11017)</name>
    <dbReference type="NCBI Taxonomy" id="329726"/>
    <lineage>
        <taxon>Bacteria</taxon>
        <taxon>Bacillati</taxon>
        <taxon>Cyanobacteriota</taxon>
        <taxon>Cyanophyceae</taxon>
        <taxon>Acaryochloridales</taxon>
        <taxon>Acaryochloridaceae</taxon>
        <taxon>Acaryochloris</taxon>
    </lineage>
</organism>
<proteinExistence type="inferred from homology"/>
<accession>B0C9N7</accession>
<name>DUT_ACAM1</name>